<keyword id="KW-0903">Direct protein sequencing</keyword>
<keyword id="KW-0472">Membrane</keyword>
<keyword id="KW-0496">Mitochondrion</keyword>
<keyword id="KW-0999">Mitochondrion inner membrane</keyword>
<feature type="chain" id="PRO_0000191307" description="Cytochrome c oxidase subunit 6C-2">
    <location>
        <begin position="1" status="less than"/>
        <end position="15" status="greater than"/>
    </location>
</feature>
<feature type="non-consecutive residues" evidence="2">
    <location>
        <begin position="8"/>
        <end position="9"/>
    </location>
</feature>
<feature type="non-terminal residue">
    <location>
        <position position="1"/>
    </location>
</feature>
<feature type="non-terminal residue">
    <location>
        <position position="15"/>
    </location>
</feature>
<organism>
    <name type="scientific">Thunnus obesus</name>
    <name type="common">Bigeye tuna</name>
    <dbReference type="NCBI Taxonomy" id="8241"/>
    <lineage>
        <taxon>Eukaryota</taxon>
        <taxon>Metazoa</taxon>
        <taxon>Chordata</taxon>
        <taxon>Craniata</taxon>
        <taxon>Vertebrata</taxon>
        <taxon>Euteleostomi</taxon>
        <taxon>Actinopterygii</taxon>
        <taxon>Neopterygii</taxon>
        <taxon>Teleostei</taxon>
        <taxon>Neoteleostei</taxon>
        <taxon>Acanthomorphata</taxon>
        <taxon>Pelagiaria</taxon>
        <taxon>Scombriformes</taxon>
        <taxon>Scombridae</taxon>
        <taxon>Thunnus</taxon>
    </lineage>
</organism>
<sequence>KMLGVVAKKPMSDYE</sequence>
<accession>P80978</accession>
<name>CX6C2_THUOB</name>
<proteinExistence type="evidence at protein level"/>
<reference key="1">
    <citation type="journal article" date="1997" name="Eur. J. Biochem.">
        <title>The subunit structure of cytochrome-c oxidase from tuna heart and liver.</title>
        <authorList>
            <person name="Arnold S."/>
            <person name="Lee I."/>
            <person name="Kim M."/>
            <person name="Song E."/>
            <person name="Linder D."/>
            <person name="Lottspeich F."/>
            <person name="Kadenbach B."/>
        </authorList>
    </citation>
    <scope>PROTEIN SEQUENCE</scope>
    <source>
        <tissue>Heart</tissue>
    </source>
</reference>
<dbReference type="PIR" id="S77987">
    <property type="entry name" value="S77987"/>
</dbReference>
<dbReference type="UniPathway" id="UPA00705"/>
<dbReference type="GO" id="GO:0005743">
    <property type="term" value="C:mitochondrial inner membrane"/>
    <property type="evidence" value="ECO:0007669"/>
    <property type="project" value="UniProtKB-SubCell"/>
</dbReference>
<dbReference type="GO" id="GO:0006119">
    <property type="term" value="P:oxidative phosphorylation"/>
    <property type="evidence" value="ECO:0007669"/>
    <property type="project" value="UniProtKB-UniPathway"/>
</dbReference>
<comment type="function">
    <text evidence="1">Component of the cytochrome c oxidase, the last enzyme in the mitochondrial electron transport chain which drives oxidative phosphorylation. The respiratory chain contains 3 multisubunit complexes succinate dehydrogenase (complex II, CII), ubiquinol-cytochrome c oxidoreductase (cytochrome b-c1 complex, complex III, CIII) and cytochrome c oxidase (complex IV, CIV), that cooperate to transfer electrons derived from NADH and succinate to molecular oxygen, creating an electrochemical gradient over the inner membrane that drives transmembrane transport and the ATP synthase. Cytochrome c oxidase is the component of the respiratory chain that catalyzes the reduction of oxygen to water. Electrons originating from reduced cytochrome c in the intermembrane space (IMS) are transferred via the dinuclear copper A center (CU(A)) of subunit 2 and heme A of subunit 1 to the active site in subunit 1, a binuclear center (BNC) formed by heme A3 and copper B (CU(B)). The BNC reduces molecular oxygen to 2 water molecules using 4 electrons from cytochrome c in the IMS and 4 protons from the mitochondrial matrix.</text>
</comment>
<comment type="pathway">
    <text evidence="1">Energy metabolism; oxidative phosphorylation.</text>
</comment>
<comment type="subunit">
    <text evidence="1">Component of the cytochrome c oxidase (complex IV, CIV), a multisubunit enzyme composed of 14 subunits. The complex is composed of a catalytic core of 3 subunits MT-CO1, MT-CO2 and MT-CO3, encoded in the mitochondrial DNA, and 11 supernumerary subunits COX4I, COX5A, COX5B, COX6A, COX6B, COX6C, COX7A, COX7B, COX7C, COX8 and NDUFA4, which are encoded in the nuclear genome. The complex exists as a monomer or a dimer and forms supercomplexes (SCs) in the inner mitochondrial membrane with NADH-ubiquinone oxidoreductase (complex I, CI) and ubiquinol-cytochrome c oxidoreductase (cytochrome b-c1 complex, complex III, CIII), resulting in different assemblies (supercomplex SCI(1)III(2)IV(1) and megacomplex MCI(2)III(2)IV(2)).</text>
</comment>
<comment type="subcellular location">
    <subcellularLocation>
        <location evidence="1">Mitochondrion inner membrane</location>
        <topology evidence="1">Single-pass membrane protein</topology>
    </subcellularLocation>
</comment>
<comment type="similarity">
    <text evidence="2">Belongs to the cytochrome c oxidase subunit 6c family.</text>
</comment>
<protein>
    <recommendedName>
        <fullName>Cytochrome c oxidase subunit 6C-2</fullName>
    </recommendedName>
    <alternativeName>
        <fullName>Cytochrome c oxidase polypeptide VIc-2</fullName>
    </alternativeName>
</protein>
<evidence type="ECO:0000250" key="1">
    <source>
        <dbReference type="UniProtKB" id="P04038"/>
    </source>
</evidence>
<evidence type="ECO:0000305" key="2"/>